<feature type="chain" id="PRO_1000013403" description="Large ribosomal subunit protein bL34">
    <location>
        <begin position="1"/>
        <end position="45"/>
    </location>
</feature>
<feature type="region of interest" description="Disordered" evidence="2">
    <location>
        <begin position="1"/>
        <end position="45"/>
    </location>
</feature>
<feature type="compositionally biased region" description="Basic residues" evidence="2">
    <location>
        <begin position="10"/>
        <end position="39"/>
    </location>
</feature>
<dbReference type="EMBL" id="CP000551">
    <property type="protein sequence ID" value="ABM70660.1"/>
    <property type="molecule type" value="Genomic_DNA"/>
</dbReference>
<dbReference type="RefSeq" id="WP_002808184.1">
    <property type="nucleotide sequence ID" value="NC_008816.1"/>
</dbReference>
<dbReference type="SMR" id="A2BS99"/>
<dbReference type="STRING" id="146891.A9601_13761"/>
<dbReference type="KEGG" id="pmb:A9601_13761"/>
<dbReference type="eggNOG" id="COG0230">
    <property type="taxonomic scope" value="Bacteria"/>
</dbReference>
<dbReference type="HOGENOM" id="CLU_129938_2_1_3"/>
<dbReference type="OrthoDB" id="9804164at2"/>
<dbReference type="Proteomes" id="UP000002590">
    <property type="component" value="Chromosome"/>
</dbReference>
<dbReference type="GO" id="GO:1990904">
    <property type="term" value="C:ribonucleoprotein complex"/>
    <property type="evidence" value="ECO:0007669"/>
    <property type="project" value="UniProtKB-KW"/>
</dbReference>
<dbReference type="GO" id="GO:0005840">
    <property type="term" value="C:ribosome"/>
    <property type="evidence" value="ECO:0007669"/>
    <property type="project" value="UniProtKB-KW"/>
</dbReference>
<dbReference type="GO" id="GO:0003735">
    <property type="term" value="F:structural constituent of ribosome"/>
    <property type="evidence" value="ECO:0007669"/>
    <property type="project" value="InterPro"/>
</dbReference>
<dbReference type="GO" id="GO:0006412">
    <property type="term" value="P:translation"/>
    <property type="evidence" value="ECO:0007669"/>
    <property type="project" value="UniProtKB-UniRule"/>
</dbReference>
<dbReference type="Gene3D" id="1.10.287.3980">
    <property type="match status" value="1"/>
</dbReference>
<dbReference type="HAMAP" id="MF_00391">
    <property type="entry name" value="Ribosomal_bL34"/>
    <property type="match status" value="1"/>
</dbReference>
<dbReference type="InterPro" id="IPR000271">
    <property type="entry name" value="Ribosomal_bL34"/>
</dbReference>
<dbReference type="InterPro" id="IPR020939">
    <property type="entry name" value="Ribosomal_bL34_CS"/>
</dbReference>
<dbReference type="NCBIfam" id="TIGR01030">
    <property type="entry name" value="rpmH_bact"/>
    <property type="match status" value="1"/>
</dbReference>
<dbReference type="Pfam" id="PF00468">
    <property type="entry name" value="Ribosomal_L34"/>
    <property type="match status" value="1"/>
</dbReference>
<dbReference type="PROSITE" id="PS00784">
    <property type="entry name" value="RIBOSOMAL_L34"/>
    <property type="match status" value="1"/>
</dbReference>
<accession>A2BS99</accession>
<proteinExistence type="inferred from homology"/>
<evidence type="ECO:0000255" key="1">
    <source>
        <dbReference type="HAMAP-Rule" id="MF_00391"/>
    </source>
</evidence>
<evidence type="ECO:0000256" key="2">
    <source>
        <dbReference type="SAM" id="MobiDB-lite"/>
    </source>
</evidence>
<evidence type="ECO:0000305" key="3"/>
<sequence length="45" mass="5372">MTKRTFGGTSRKRKRVSGFRVRMRSHTGRRVIKSRRQKGRERIAV</sequence>
<gene>
    <name evidence="1" type="primary">rpmH</name>
    <name evidence="1" type="synonym">rpl34</name>
    <name type="ordered locus">A9601_13761</name>
</gene>
<protein>
    <recommendedName>
        <fullName evidence="1">Large ribosomal subunit protein bL34</fullName>
    </recommendedName>
    <alternativeName>
        <fullName evidence="3">50S ribosomal protein L34</fullName>
    </alternativeName>
</protein>
<name>RL34_PROMS</name>
<keyword id="KW-0687">Ribonucleoprotein</keyword>
<keyword id="KW-0689">Ribosomal protein</keyword>
<comment type="similarity">
    <text evidence="1">Belongs to the bacterial ribosomal protein bL34 family.</text>
</comment>
<reference key="1">
    <citation type="journal article" date="2007" name="PLoS Genet.">
        <title>Patterns and implications of gene gain and loss in the evolution of Prochlorococcus.</title>
        <authorList>
            <person name="Kettler G.C."/>
            <person name="Martiny A.C."/>
            <person name="Huang K."/>
            <person name="Zucker J."/>
            <person name="Coleman M.L."/>
            <person name="Rodrigue S."/>
            <person name="Chen F."/>
            <person name="Lapidus A."/>
            <person name="Ferriera S."/>
            <person name="Johnson J."/>
            <person name="Steglich C."/>
            <person name="Church G.M."/>
            <person name="Richardson P."/>
            <person name="Chisholm S.W."/>
        </authorList>
    </citation>
    <scope>NUCLEOTIDE SEQUENCE [LARGE SCALE GENOMIC DNA]</scope>
    <source>
        <strain>AS9601</strain>
    </source>
</reference>
<organism>
    <name type="scientific">Prochlorococcus marinus (strain AS9601)</name>
    <dbReference type="NCBI Taxonomy" id="146891"/>
    <lineage>
        <taxon>Bacteria</taxon>
        <taxon>Bacillati</taxon>
        <taxon>Cyanobacteriota</taxon>
        <taxon>Cyanophyceae</taxon>
        <taxon>Synechococcales</taxon>
        <taxon>Prochlorococcaceae</taxon>
        <taxon>Prochlorococcus</taxon>
    </lineage>
</organism>